<gene>
    <name evidence="4" type="primary">Tmem207</name>
</gene>
<evidence type="ECO:0000250" key="1"/>
<evidence type="ECO:0000255" key="2"/>
<evidence type="ECO:0000305" key="3"/>
<evidence type="ECO:0000312" key="4">
    <source>
        <dbReference type="MGI" id="MGI:2685386"/>
    </source>
</evidence>
<reference evidence="3" key="1">
    <citation type="journal article" date="2005" name="Science">
        <title>The transcriptional landscape of the mammalian genome.</title>
        <authorList>
            <person name="Carninci P."/>
            <person name="Kasukawa T."/>
            <person name="Katayama S."/>
            <person name="Gough J."/>
            <person name="Frith M.C."/>
            <person name="Maeda N."/>
            <person name="Oyama R."/>
            <person name="Ravasi T."/>
            <person name="Lenhard B."/>
            <person name="Wells C."/>
            <person name="Kodzius R."/>
            <person name="Shimokawa K."/>
            <person name="Bajic V.B."/>
            <person name="Brenner S.E."/>
            <person name="Batalov S."/>
            <person name="Forrest A.R."/>
            <person name="Zavolan M."/>
            <person name="Davis M.J."/>
            <person name="Wilming L.G."/>
            <person name="Aidinis V."/>
            <person name="Allen J.E."/>
            <person name="Ambesi-Impiombato A."/>
            <person name="Apweiler R."/>
            <person name="Aturaliya R.N."/>
            <person name="Bailey T.L."/>
            <person name="Bansal M."/>
            <person name="Baxter L."/>
            <person name="Beisel K.W."/>
            <person name="Bersano T."/>
            <person name="Bono H."/>
            <person name="Chalk A.M."/>
            <person name="Chiu K.P."/>
            <person name="Choudhary V."/>
            <person name="Christoffels A."/>
            <person name="Clutterbuck D.R."/>
            <person name="Crowe M.L."/>
            <person name="Dalla E."/>
            <person name="Dalrymple B.P."/>
            <person name="de Bono B."/>
            <person name="Della Gatta G."/>
            <person name="di Bernardo D."/>
            <person name="Down T."/>
            <person name="Engstrom P."/>
            <person name="Fagiolini M."/>
            <person name="Faulkner G."/>
            <person name="Fletcher C.F."/>
            <person name="Fukushima T."/>
            <person name="Furuno M."/>
            <person name="Futaki S."/>
            <person name="Gariboldi M."/>
            <person name="Georgii-Hemming P."/>
            <person name="Gingeras T.R."/>
            <person name="Gojobori T."/>
            <person name="Green R.E."/>
            <person name="Gustincich S."/>
            <person name="Harbers M."/>
            <person name="Hayashi Y."/>
            <person name="Hensch T.K."/>
            <person name="Hirokawa N."/>
            <person name="Hill D."/>
            <person name="Huminiecki L."/>
            <person name="Iacono M."/>
            <person name="Ikeo K."/>
            <person name="Iwama A."/>
            <person name="Ishikawa T."/>
            <person name="Jakt M."/>
            <person name="Kanapin A."/>
            <person name="Katoh M."/>
            <person name="Kawasawa Y."/>
            <person name="Kelso J."/>
            <person name="Kitamura H."/>
            <person name="Kitano H."/>
            <person name="Kollias G."/>
            <person name="Krishnan S.P."/>
            <person name="Kruger A."/>
            <person name="Kummerfeld S.K."/>
            <person name="Kurochkin I.V."/>
            <person name="Lareau L.F."/>
            <person name="Lazarevic D."/>
            <person name="Lipovich L."/>
            <person name="Liu J."/>
            <person name="Liuni S."/>
            <person name="McWilliam S."/>
            <person name="Madan Babu M."/>
            <person name="Madera M."/>
            <person name="Marchionni L."/>
            <person name="Matsuda H."/>
            <person name="Matsuzawa S."/>
            <person name="Miki H."/>
            <person name="Mignone F."/>
            <person name="Miyake S."/>
            <person name="Morris K."/>
            <person name="Mottagui-Tabar S."/>
            <person name="Mulder N."/>
            <person name="Nakano N."/>
            <person name="Nakauchi H."/>
            <person name="Ng P."/>
            <person name="Nilsson R."/>
            <person name="Nishiguchi S."/>
            <person name="Nishikawa S."/>
            <person name="Nori F."/>
            <person name="Ohara O."/>
            <person name="Okazaki Y."/>
            <person name="Orlando V."/>
            <person name="Pang K.C."/>
            <person name="Pavan W.J."/>
            <person name="Pavesi G."/>
            <person name="Pesole G."/>
            <person name="Petrovsky N."/>
            <person name="Piazza S."/>
            <person name="Reed J."/>
            <person name="Reid J.F."/>
            <person name="Ring B.Z."/>
            <person name="Ringwald M."/>
            <person name="Rost B."/>
            <person name="Ruan Y."/>
            <person name="Salzberg S.L."/>
            <person name="Sandelin A."/>
            <person name="Schneider C."/>
            <person name="Schoenbach C."/>
            <person name="Sekiguchi K."/>
            <person name="Semple C.A."/>
            <person name="Seno S."/>
            <person name="Sessa L."/>
            <person name="Sheng Y."/>
            <person name="Shibata Y."/>
            <person name="Shimada H."/>
            <person name="Shimada K."/>
            <person name="Silva D."/>
            <person name="Sinclair B."/>
            <person name="Sperling S."/>
            <person name="Stupka E."/>
            <person name="Sugiura K."/>
            <person name="Sultana R."/>
            <person name="Takenaka Y."/>
            <person name="Taki K."/>
            <person name="Tammoja K."/>
            <person name="Tan S.L."/>
            <person name="Tang S."/>
            <person name="Taylor M.S."/>
            <person name="Tegner J."/>
            <person name="Teichmann S.A."/>
            <person name="Ueda H.R."/>
            <person name="van Nimwegen E."/>
            <person name="Verardo R."/>
            <person name="Wei C.L."/>
            <person name="Yagi K."/>
            <person name="Yamanishi H."/>
            <person name="Zabarovsky E."/>
            <person name="Zhu S."/>
            <person name="Zimmer A."/>
            <person name="Hide W."/>
            <person name="Bult C."/>
            <person name="Grimmond S.M."/>
            <person name="Teasdale R.D."/>
            <person name="Liu E.T."/>
            <person name="Brusic V."/>
            <person name="Quackenbush J."/>
            <person name="Wahlestedt C."/>
            <person name="Mattick J.S."/>
            <person name="Hume D.A."/>
            <person name="Kai C."/>
            <person name="Sasaki D."/>
            <person name="Tomaru Y."/>
            <person name="Fukuda S."/>
            <person name="Kanamori-Katayama M."/>
            <person name="Suzuki M."/>
            <person name="Aoki J."/>
            <person name="Arakawa T."/>
            <person name="Iida J."/>
            <person name="Imamura K."/>
            <person name="Itoh M."/>
            <person name="Kato T."/>
            <person name="Kawaji H."/>
            <person name="Kawagashira N."/>
            <person name="Kawashima T."/>
            <person name="Kojima M."/>
            <person name="Kondo S."/>
            <person name="Konno H."/>
            <person name="Nakano K."/>
            <person name="Ninomiya N."/>
            <person name="Nishio T."/>
            <person name="Okada M."/>
            <person name="Plessy C."/>
            <person name="Shibata K."/>
            <person name="Shiraki T."/>
            <person name="Suzuki S."/>
            <person name="Tagami M."/>
            <person name="Waki K."/>
            <person name="Watahiki A."/>
            <person name="Okamura-Oho Y."/>
            <person name="Suzuki H."/>
            <person name="Kawai J."/>
            <person name="Hayashizaki Y."/>
        </authorList>
    </citation>
    <scope>NUCLEOTIDE SEQUENCE [LARGE SCALE MRNA]</scope>
</reference>
<reference key="2">
    <citation type="journal article" date="2009" name="PLoS Biol.">
        <title>Lineage-specific biology revealed by a finished genome assembly of the mouse.</title>
        <authorList>
            <person name="Church D.M."/>
            <person name="Goodstadt L."/>
            <person name="Hillier L.W."/>
            <person name="Zody M.C."/>
            <person name="Goldstein S."/>
            <person name="She X."/>
            <person name="Bult C.J."/>
            <person name="Agarwala R."/>
            <person name="Cherry J.L."/>
            <person name="DiCuccio M."/>
            <person name="Hlavina W."/>
            <person name="Kapustin Y."/>
            <person name="Meric P."/>
            <person name="Maglott D."/>
            <person name="Birtle Z."/>
            <person name="Marques A.C."/>
            <person name="Graves T."/>
            <person name="Zhou S."/>
            <person name="Teague B."/>
            <person name="Potamousis K."/>
            <person name="Churas C."/>
            <person name="Place M."/>
            <person name="Herschleb J."/>
            <person name="Runnheim R."/>
            <person name="Forrest D."/>
            <person name="Amos-Landgraf J."/>
            <person name="Schwartz D.C."/>
            <person name="Cheng Z."/>
            <person name="Lindblad-Toh K."/>
            <person name="Eichler E.E."/>
            <person name="Ponting C.P."/>
        </authorList>
    </citation>
    <scope>NUCLEOTIDE SEQUENCE [LARGE SCALE GENOMIC DNA]</scope>
    <source>
        <strain>C57BL/6J</strain>
    </source>
</reference>
<name>TM207_MOUSE</name>
<comment type="subunit">
    <text evidence="1">Interacts with WWOX.</text>
</comment>
<comment type="subcellular location">
    <subcellularLocation>
        <location evidence="2">Membrane</location>
        <topology evidence="3">Single-pass type I membrane protein</topology>
    </subcellularLocation>
</comment>
<comment type="sequence caution" evidence="3">
    <conflict type="miscellaneous discrepancy">
        <sequence resource="EMBL" id="AK142524"/>
    </conflict>
    <text>Intron retention.</text>
</comment>
<proteinExistence type="evidence at transcript level"/>
<protein>
    <recommendedName>
        <fullName evidence="4">Transmembrane protein 207</fullName>
    </recommendedName>
</protein>
<sequence>MSTSSPFRVASKIVTAGCLCLPLFQRVLSDLSCEENEMCVNYDERYPDGWYIWFFLLIFLVVLLCGVVLFCLQCWLKRCGINPPRRTMAVFAVGDLDPVYGAEMAGSPTSGICHPTQNTELCSAPCFGALGPPPPYEEILKAN</sequence>
<dbReference type="EMBL" id="AK142524">
    <property type="status" value="NOT_ANNOTATED_CDS"/>
    <property type="molecule type" value="mRNA"/>
</dbReference>
<dbReference type="EMBL" id="AC154601">
    <property type="status" value="NOT_ANNOTATED_CDS"/>
    <property type="molecule type" value="Genomic_DNA"/>
</dbReference>
<dbReference type="CCDS" id="CCDS49813.1"/>
<dbReference type="RefSeq" id="NP_001095110.1">
    <property type="nucleotide sequence ID" value="NM_001101640.1"/>
</dbReference>
<dbReference type="SMR" id="P86045"/>
<dbReference type="FunCoup" id="P86045">
    <property type="interactions" value="9"/>
</dbReference>
<dbReference type="STRING" id="10090.ENSMUSP00000127563"/>
<dbReference type="PhosphoSitePlus" id="P86045"/>
<dbReference type="PaxDb" id="10090-ENSMUSP00000127563"/>
<dbReference type="Antibodypedia" id="3068">
    <property type="antibodies" value="35 antibodies from 10 providers"/>
</dbReference>
<dbReference type="Ensembl" id="ENSMUST00000165687.3">
    <property type="protein sequence ID" value="ENSMUSP00000127563.2"/>
    <property type="gene ID" value="ENSMUSG00000091972.3"/>
</dbReference>
<dbReference type="GeneID" id="100043057"/>
<dbReference type="KEGG" id="mmu:100043057"/>
<dbReference type="UCSC" id="uc012adv.1">
    <property type="organism name" value="mouse"/>
</dbReference>
<dbReference type="AGR" id="MGI:2685386"/>
<dbReference type="CTD" id="131920"/>
<dbReference type="MGI" id="MGI:2685386">
    <property type="gene designation" value="Tmem207"/>
</dbReference>
<dbReference type="VEuPathDB" id="HostDB:ENSMUSG00000091972"/>
<dbReference type="eggNOG" id="ENOG502STQD">
    <property type="taxonomic scope" value="Eukaryota"/>
</dbReference>
<dbReference type="GeneTree" id="ENSGT00390000006126"/>
<dbReference type="HOGENOM" id="CLU_149421_0_0_1"/>
<dbReference type="InParanoid" id="P86045"/>
<dbReference type="OMA" id="PNGWYIW"/>
<dbReference type="OrthoDB" id="9907850at2759"/>
<dbReference type="PhylomeDB" id="P86045"/>
<dbReference type="TreeFam" id="TF342774"/>
<dbReference type="BioGRID-ORCS" id="100043057">
    <property type="hits" value="3 hits in 79 CRISPR screens"/>
</dbReference>
<dbReference type="PRO" id="PR:P86045"/>
<dbReference type="Proteomes" id="UP000000589">
    <property type="component" value="Chromosome 16"/>
</dbReference>
<dbReference type="RNAct" id="P86045">
    <property type="molecule type" value="protein"/>
</dbReference>
<dbReference type="Bgee" id="ENSMUSG00000091972">
    <property type="expression patterns" value="Expressed in right kidney and 7 other cell types or tissues"/>
</dbReference>
<dbReference type="GO" id="GO:0016020">
    <property type="term" value="C:membrane"/>
    <property type="evidence" value="ECO:0007669"/>
    <property type="project" value="UniProtKB-SubCell"/>
</dbReference>
<dbReference type="InterPro" id="IPR039490">
    <property type="entry name" value="TMEM207"/>
</dbReference>
<dbReference type="PANTHER" id="PTHR36467">
    <property type="entry name" value="TRANSMEMBRANE PROTEIN 207"/>
    <property type="match status" value="1"/>
</dbReference>
<dbReference type="PANTHER" id="PTHR36467:SF1">
    <property type="entry name" value="TRANSMEMBRANE PROTEIN 207"/>
    <property type="match status" value="1"/>
</dbReference>
<feature type="signal peptide" evidence="2">
    <location>
        <begin position="1"/>
        <end position="29"/>
    </location>
</feature>
<feature type="chain" id="PRO_0000355136" description="Transmembrane protein 207" evidence="2">
    <location>
        <begin position="30"/>
        <end position="143"/>
    </location>
</feature>
<feature type="transmembrane region" description="Helical" evidence="2">
    <location>
        <begin position="52"/>
        <end position="72"/>
    </location>
</feature>
<keyword id="KW-0472">Membrane</keyword>
<keyword id="KW-1185">Reference proteome</keyword>
<keyword id="KW-0732">Signal</keyword>
<keyword id="KW-0812">Transmembrane</keyword>
<keyword id="KW-1133">Transmembrane helix</keyword>
<accession>P86045</accession>
<organism>
    <name type="scientific">Mus musculus</name>
    <name type="common">Mouse</name>
    <dbReference type="NCBI Taxonomy" id="10090"/>
    <lineage>
        <taxon>Eukaryota</taxon>
        <taxon>Metazoa</taxon>
        <taxon>Chordata</taxon>
        <taxon>Craniata</taxon>
        <taxon>Vertebrata</taxon>
        <taxon>Euteleostomi</taxon>
        <taxon>Mammalia</taxon>
        <taxon>Eutheria</taxon>
        <taxon>Euarchontoglires</taxon>
        <taxon>Glires</taxon>
        <taxon>Rodentia</taxon>
        <taxon>Myomorpha</taxon>
        <taxon>Muroidea</taxon>
        <taxon>Muridae</taxon>
        <taxon>Murinae</taxon>
        <taxon>Mus</taxon>
        <taxon>Mus</taxon>
    </lineage>
</organism>